<accession>C1B7S4</accession>
<dbReference type="EMBL" id="AP011115">
    <property type="protein sequence ID" value="BAH51727.1"/>
    <property type="molecule type" value="Genomic_DNA"/>
</dbReference>
<dbReference type="RefSeq" id="WP_012690674.1">
    <property type="nucleotide sequence ID" value="NC_012522.1"/>
</dbReference>
<dbReference type="STRING" id="632772.ROP_34800"/>
<dbReference type="KEGG" id="rop:ROP_34800"/>
<dbReference type="PATRIC" id="fig|632772.20.peg.3645"/>
<dbReference type="HOGENOM" id="CLU_144811_2_1_11"/>
<dbReference type="OrthoDB" id="9801753at2"/>
<dbReference type="Proteomes" id="UP000002212">
    <property type="component" value="Chromosome"/>
</dbReference>
<dbReference type="GO" id="GO:0005886">
    <property type="term" value="C:plasma membrane"/>
    <property type="evidence" value="ECO:0007669"/>
    <property type="project" value="UniProtKB-SubCell"/>
</dbReference>
<dbReference type="HAMAP" id="MF_00386">
    <property type="entry name" value="UPF0161_YidD"/>
    <property type="match status" value="1"/>
</dbReference>
<dbReference type="InterPro" id="IPR002696">
    <property type="entry name" value="Membr_insert_effic_factor_YidD"/>
</dbReference>
<dbReference type="NCBIfam" id="TIGR00278">
    <property type="entry name" value="membrane protein insertion efficiency factor YidD"/>
    <property type="match status" value="1"/>
</dbReference>
<dbReference type="PANTHER" id="PTHR33383">
    <property type="entry name" value="MEMBRANE PROTEIN INSERTION EFFICIENCY FACTOR-RELATED"/>
    <property type="match status" value="1"/>
</dbReference>
<dbReference type="PANTHER" id="PTHR33383:SF1">
    <property type="entry name" value="MEMBRANE PROTEIN INSERTION EFFICIENCY FACTOR-RELATED"/>
    <property type="match status" value="1"/>
</dbReference>
<dbReference type="Pfam" id="PF01809">
    <property type="entry name" value="YidD"/>
    <property type="match status" value="1"/>
</dbReference>
<dbReference type="SMART" id="SM01234">
    <property type="entry name" value="Haemolytic"/>
    <property type="match status" value="1"/>
</dbReference>
<feature type="chain" id="PRO_1000197774" description="Putative membrane protein insertion efficiency factor">
    <location>
        <begin position="1"/>
        <end position="121"/>
    </location>
</feature>
<keyword id="KW-1003">Cell membrane</keyword>
<keyword id="KW-0472">Membrane</keyword>
<gene>
    <name type="ordered locus">ROP_34800</name>
</gene>
<evidence type="ECO:0000255" key="1">
    <source>
        <dbReference type="HAMAP-Rule" id="MF_00386"/>
    </source>
</evidence>
<protein>
    <recommendedName>
        <fullName evidence="1">Putative membrane protein insertion efficiency factor</fullName>
    </recommendedName>
</protein>
<proteinExistence type="inferred from homology"/>
<comment type="function">
    <text evidence="1">Could be involved in insertion of integral membrane proteins into the membrane.</text>
</comment>
<comment type="subcellular location">
    <subcellularLocation>
        <location evidence="1">Cell membrane</location>
        <topology evidence="1">Peripheral membrane protein</topology>
        <orientation evidence="1">Cytoplasmic side</orientation>
    </subcellularLocation>
</comment>
<comment type="similarity">
    <text evidence="1">Belongs to the UPF0161 family.</text>
</comment>
<organism>
    <name type="scientific">Rhodococcus opacus (strain B4)</name>
    <dbReference type="NCBI Taxonomy" id="632772"/>
    <lineage>
        <taxon>Bacteria</taxon>
        <taxon>Bacillati</taxon>
        <taxon>Actinomycetota</taxon>
        <taxon>Actinomycetes</taxon>
        <taxon>Mycobacteriales</taxon>
        <taxon>Nocardiaceae</taxon>
        <taxon>Rhodococcus</taxon>
    </lineage>
</organism>
<sequence length="121" mass="13484">MKSALHESRADTAEGTSSASSAWKSVRALPARTLIFFIELYRTYVSPLRMPTCRFMPTCSEYAVESLRTHGTIKGLLLTVVRLAKCAPWHPGGWDPVPARHDRHAGSRRCCPANVDEQRST</sequence>
<name>YIDD_RHOOB</name>
<reference key="1">
    <citation type="submission" date="2009-03" db="EMBL/GenBank/DDBJ databases">
        <title>Comparison of the complete genome sequences of Rhodococcus erythropolis PR4 and Rhodococcus opacus B4.</title>
        <authorList>
            <person name="Takarada H."/>
            <person name="Sekine M."/>
            <person name="Hosoyama A."/>
            <person name="Yamada R."/>
            <person name="Fujisawa T."/>
            <person name="Omata S."/>
            <person name="Shimizu A."/>
            <person name="Tsukatani N."/>
            <person name="Tanikawa S."/>
            <person name="Fujita N."/>
            <person name="Harayama S."/>
        </authorList>
    </citation>
    <scope>NUCLEOTIDE SEQUENCE [LARGE SCALE GENOMIC DNA]</scope>
    <source>
        <strain>B4</strain>
    </source>
</reference>